<name>KDSA_CHLPN</name>
<gene>
    <name type="primary">kdsA</name>
    <name type="ordered locus">CPn_0721</name>
    <name type="ordered locus">CP_0025</name>
    <name type="ordered locus">CpB0749</name>
</gene>
<reference key="1">
    <citation type="journal article" date="1999" name="Nat. Genet.">
        <title>Comparative genomes of Chlamydia pneumoniae and C. trachomatis.</title>
        <authorList>
            <person name="Kalman S."/>
            <person name="Mitchell W.P."/>
            <person name="Marathe R."/>
            <person name="Lammel C.J."/>
            <person name="Fan J."/>
            <person name="Hyman R.W."/>
            <person name="Olinger L."/>
            <person name="Grimwood J."/>
            <person name="Davis R.W."/>
            <person name="Stephens R.S."/>
        </authorList>
    </citation>
    <scope>NUCLEOTIDE SEQUENCE [LARGE SCALE GENOMIC DNA]</scope>
    <source>
        <strain>CWL029</strain>
    </source>
</reference>
<reference key="2">
    <citation type="journal article" date="2000" name="Nucleic Acids Res.">
        <title>Genome sequences of Chlamydia trachomatis MoPn and Chlamydia pneumoniae AR39.</title>
        <authorList>
            <person name="Read T.D."/>
            <person name="Brunham R.C."/>
            <person name="Shen C."/>
            <person name="Gill S.R."/>
            <person name="Heidelberg J.F."/>
            <person name="White O."/>
            <person name="Hickey E.K."/>
            <person name="Peterson J.D."/>
            <person name="Utterback T.R."/>
            <person name="Berry K.J."/>
            <person name="Bass S."/>
            <person name="Linher K.D."/>
            <person name="Weidman J.F."/>
            <person name="Khouri H.M."/>
            <person name="Craven B."/>
            <person name="Bowman C."/>
            <person name="Dodson R.J."/>
            <person name="Gwinn M.L."/>
            <person name="Nelson W.C."/>
            <person name="DeBoy R.T."/>
            <person name="Kolonay J.F."/>
            <person name="McClarty G."/>
            <person name="Salzberg S.L."/>
            <person name="Eisen J.A."/>
            <person name="Fraser C.M."/>
        </authorList>
    </citation>
    <scope>NUCLEOTIDE SEQUENCE [LARGE SCALE GENOMIC DNA]</scope>
    <source>
        <strain>AR39</strain>
    </source>
</reference>
<reference key="3">
    <citation type="journal article" date="2000" name="Nucleic Acids Res.">
        <title>Comparison of whole genome sequences of Chlamydia pneumoniae J138 from Japan and CWL029 from USA.</title>
        <authorList>
            <person name="Shirai M."/>
            <person name="Hirakawa H."/>
            <person name="Kimoto M."/>
            <person name="Tabuchi M."/>
            <person name="Kishi F."/>
            <person name="Ouchi K."/>
            <person name="Shiba T."/>
            <person name="Ishii K."/>
            <person name="Hattori M."/>
            <person name="Kuhara S."/>
            <person name="Nakazawa T."/>
        </authorList>
    </citation>
    <scope>NUCLEOTIDE SEQUENCE [LARGE SCALE GENOMIC DNA]</scope>
    <source>
        <strain>J138</strain>
    </source>
</reference>
<reference key="4">
    <citation type="submission" date="2002-05" db="EMBL/GenBank/DDBJ databases">
        <title>The genome sequence of Chlamydia pneumoniae TW183 and comparison with other Chlamydia strains based on whole genome sequence analysis.</title>
        <authorList>
            <person name="Geng M.M."/>
            <person name="Schuhmacher A."/>
            <person name="Muehldorfer I."/>
            <person name="Bensch K.W."/>
            <person name="Schaefer K.P."/>
            <person name="Schneider S."/>
            <person name="Pohl T."/>
            <person name="Essig A."/>
            <person name="Marre R."/>
            <person name="Melchers K."/>
        </authorList>
    </citation>
    <scope>NUCLEOTIDE SEQUENCE [LARGE SCALE GENOMIC DNA]</scope>
    <source>
        <strain>TW-183</strain>
    </source>
</reference>
<dbReference type="EC" id="2.5.1.55"/>
<dbReference type="EMBL" id="AE001363">
    <property type="protein sequence ID" value="AAD18860.1"/>
    <property type="molecule type" value="Genomic_DNA"/>
</dbReference>
<dbReference type="EMBL" id="AE002161">
    <property type="protein sequence ID" value="AAF37920.1"/>
    <property type="status" value="ALT_INIT"/>
    <property type="molecule type" value="Genomic_DNA"/>
</dbReference>
<dbReference type="EMBL" id="BA000008">
    <property type="protein sequence ID" value="BAA98928.1"/>
    <property type="molecule type" value="Genomic_DNA"/>
</dbReference>
<dbReference type="EMBL" id="AE009440">
    <property type="protein sequence ID" value="AAP98678.1"/>
    <property type="molecule type" value="Genomic_DNA"/>
</dbReference>
<dbReference type="PIR" id="A72044">
    <property type="entry name" value="A72044"/>
</dbReference>
<dbReference type="PIR" id="E81621">
    <property type="entry name" value="E81621"/>
</dbReference>
<dbReference type="PIR" id="F86580">
    <property type="entry name" value="F86580"/>
</dbReference>
<dbReference type="RefSeq" id="NP_224917.1">
    <property type="nucleotide sequence ID" value="NC_000922.1"/>
</dbReference>
<dbReference type="RefSeq" id="WP_010883359.1">
    <property type="nucleotide sequence ID" value="NZ_LN847257.1"/>
</dbReference>
<dbReference type="SMR" id="Q9Z7I4"/>
<dbReference type="STRING" id="406984.CPK_ORF00126"/>
<dbReference type="GeneID" id="45050777"/>
<dbReference type="KEGG" id="cpa:CP_0025"/>
<dbReference type="KEGG" id="cpj:kdsA"/>
<dbReference type="KEGG" id="cpn:CPn_0721"/>
<dbReference type="KEGG" id="cpt:CpB0749"/>
<dbReference type="PATRIC" id="fig|115713.3.peg.796"/>
<dbReference type="eggNOG" id="COG2877">
    <property type="taxonomic scope" value="Bacteria"/>
</dbReference>
<dbReference type="HOGENOM" id="CLU_036666_0_0_0"/>
<dbReference type="OrthoDB" id="9780456at2"/>
<dbReference type="BRENDA" id="2.5.1.55">
    <property type="organism ID" value="1311"/>
</dbReference>
<dbReference type="UniPathway" id="UPA00030"/>
<dbReference type="UniPathway" id="UPA00357">
    <property type="reaction ID" value="UER00474"/>
</dbReference>
<dbReference type="Proteomes" id="UP000000583">
    <property type="component" value="Chromosome"/>
</dbReference>
<dbReference type="Proteomes" id="UP000000801">
    <property type="component" value="Chromosome"/>
</dbReference>
<dbReference type="GO" id="GO:0005737">
    <property type="term" value="C:cytoplasm"/>
    <property type="evidence" value="ECO:0007669"/>
    <property type="project" value="UniProtKB-SubCell"/>
</dbReference>
<dbReference type="GO" id="GO:0008676">
    <property type="term" value="F:3-deoxy-8-phosphooctulonate synthase activity"/>
    <property type="evidence" value="ECO:0007669"/>
    <property type="project" value="UniProtKB-UniRule"/>
</dbReference>
<dbReference type="GO" id="GO:0019294">
    <property type="term" value="P:keto-3-deoxy-D-manno-octulosonic acid biosynthetic process"/>
    <property type="evidence" value="ECO:0007669"/>
    <property type="project" value="UniProtKB-UniRule"/>
</dbReference>
<dbReference type="Gene3D" id="3.20.20.70">
    <property type="entry name" value="Aldolase class I"/>
    <property type="match status" value="1"/>
</dbReference>
<dbReference type="HAMAP" id="MF_00056">
    <property type="entry name" value="KDO8P_synth"/>
    <property type="match status" value="1"/>
</dbReference>
<dbReference type="InterPro" id="IPR013785">
    <property type="entry name" value="Aldolase_TIM"/>
</dbReference>
<dbReference type="InterPro" id="IPR006218">
    <property type="entry name" value="DAHP1/KDSA"/>
</dbReference>
<dbReference type="InterPro" id="IPR006269">
    <property type="entry name" value="KDO8P_synthase"/>
</dbReference>
<dbReference type="NCBIfam" id="TIGR01362">
    <property type="entry name" value="KDO8P_synth"/>
    <property type="match status" value="1"/>
</dbReference>
<dbReference type="NCBIfam" id="NF003543">
    <property type="entry name" value="PRK05198.1"/>
    <property type="match status" value="1"/>
</dbReference>
<dbReference type="PANTHER" id="PTHR21057">
    <property type="entry name" value="PHOSPHO-2-DEHYDRO-3-DEOXYHEPTONATE ALDOLASE"/>
    <property type="match status" value="1"/>
</dbReference>
<dbReference type="Pfam" id="PF00793">
    <property type="entry name" value="DAHP_synth_1"/>
    <property type="match status" value="1"/>
</dbReference>
<dbReference type="SUPFAM" id="SSF51569">
    <property type="entry name" value="Aldolase"/>
    <property type="match status" value="1"/>
</dbReference>
<feature type="chain" id="PRO_0000187117" description="2-dehydro-3-deoxyphosphooctonate aldolase">
    <location>
        <begin position="1"/>
        <end position="269"/>
    </location>
</feature>
<feature type="sequence conflict" description="In Ref. 3; BAA98928." evidence="2" ref="3">
    <original>N</original>
    <variation>H</variation>
    <location>
        <position position="125"/>
    </location>
</feature>
<evidence type="ECO:0000250" key="1"/>
<evidence type="ECO:0000305" key="2"/>
<proteinExistence type="inferred from homology"/>
<keyword id="KW-0963">Cytoplasm</keyword>
<keyword id="KW-0448">Lipopolysaccharide biosynthesis</keyword>
<keyword id="KW-0808">Transferase</keyword>
<sequence length="269" mass="28994">MFNNKMILIAGPCVIEGEDITLEIAGKLQSILAPYSDRIQWFFKSSYDKANRSSLNSFRGPGLTEGLRILAKVKETFGVGILTDVHTPQDAYAAAEVCNILQVPAFLCRQTDLLVATAETGAIVNLKKGQFLSPWDMEGPINKVLSTGNNKILLTERGCSFGYNNLVSDMRSIPVLSRSGFPVIFDATHSVQLPGALSTESGGLTEFVPTLSRAALAAGAHGLFIETHTNPKIAKSDAASMLSLEEFAALLPTWDQLFTCVSSFDMVSA</sequence>
<organism>
    <name type="scientific">Chlamydia pneumoniae</name>
    <name type="common">Chlamydophila pneumoniae</name>
    <dbReference type="NCBI Taxonomy" id="83558"/>
    <lineage>
        <taxon>Bacteria</taxon>
        <taxon>Pseudomonadati</taxon>
        <taxon>Chlamydiota</taxon>
        <taxon>Chlamydiia</taxon>
        <taxon>Chlamydiales</taxon>
        <taxon>Chlamydiaceae</taxon>
        <taxon>Chlamydia/Chlamydophila group</taxon>
        <taxon>Chlamydia</taxon>
    </lineage>
</organism>
<protein>
    <recommendedName>
        <fullName>2-dehydro-3-deoxyphosphooctonate aldolase</fullName>
        <ecNumber>2.5.1.55</ecNumber>
    </recommendedName>
    <alternativeName>
        <fullName>3-deoxy-D-manno-octulosonic acid 8-phosphate synthase</fullName>
    </alternativeName>
    <alternativeName>
        <fullName>KDO-8-phosphate synthase</fullName>
        <shortName>KDO 8-P synthase</shortName>
        <shortName>KDOPS</shortName>
    </alternativeName>
    <alternativeName>
        <fullName>Phospho-2-dehydro-3-deoxyoctonate aldolase</fullName>
    </alternativeName>
</protein>
<accession>Q9Z7I4</accession>
<accession>Q9JSB6</accession>
<accession>Q9K2E8</accession>
<comment type="catalytic activity">
    <reaction>
        <text>D-arabinose 5-phosphate + phosphoenolpyruvate + H2O = 3-deoxy-alpha-D-manno-2-octulosonate-8-phosphate + phosphate</text>
        <dbReference type="Rhea" id="RHEA:14053"/>
        <dbReference type="ChEBI" id="CHEBI:15377"/>
        <dbReference type="ChEBI" id="CHEBI:43474"/>
        <dbReference type="ChEBI" id="CHEBI:57693"/>
        <dbReference type="ChEBI" id="CHEBI:58702"/>
        <dbReference type="ChEBI" id="CHEBI:85985"/>
        <dbReference type="EC" id="2.5.1.55"/>
    </reaction>
</comment>
<comment type="pathway">
    <text>Carbohydrate biosynthesis; 3-deoxy-D-manno-octulosonate biosynthesis; 3-deoxy-D-manno-octulosonate from D-ribulose 5-phosphate: step 2/3.</text>
</comment>
<comment type="pathway">
    <text>Bacterial outer membrane biogenesis; lipopolysaccharide biosynthesis.</text>
</comment>
<comment type="subcellular location">
    <subcellularLocation>
        <location evidence="1">Cytoplasm</location>
    </subcellularLocation>
</comment>
<comment type="similarity">
    <text evidence="2">Belongs to the KdsA family.</text>
</comment>
<comment type="sequence caution" evidence="2">
    <conflict type="erroneous initiation">
        <sequence resource="EMBL-CDS" id="AAF37920"/>
    </conflict>
</comment>